<keyword id="KW-0256">Endoplasmic reticulum</keyword>
<keyword id="KW-0472">Membrane</keyword>
<keyword id="KW-1185">Reference proteome</keyword>
<keyword id="KW-0812">Transmembrane</keyword>
<keyword id="KW-1133">Transmembrane helix</keyword>
<sequence>MGSSSSRRRSSSLVTKVPKPTIDDRLDQGSATNYNSNWVNYKGAWVIHIVLIAALRLIFHAIPSVSRELAWTLTNLTYMAGSFIMFHWVTGTPFEFNGGAYDRLTMWEQLDEGNQYTPARKYLLVLPIILFLMSTHYTHYNGWMFLVNIWALFMVLIPKLPAVHRKRIFGIQKLSLRDDDNDSIPR</sequence>
<organism>
    <name type="scientific">Schizosaccharomyces pombe (strain 972 / ATCC 24843)</name>
    <name type="common">Fission yeast</name>
    <dbReference type="NCBI Taxonomy" id="284812"/>
    <lineage>
        <taxon>Eukaryota</taxon>
        <taxon>Fungi</taxon>
        <taxon>Dikarya</taxon>
        <taxon>Ascomycota</taxon>
        <taxon>Taphrinomycotina</taxon>
        <taxon>Schizosaccharomycetes</taxon>
        <taxon>Schizosaccharomycetales</taxon>
        <taxon>Schizosaccharomycetaceae</taxon>
        <taxon>Schizosaccharomyces</taxon>
    </lineage>
</organism>
<feature type="chain" id="PRO_0000116508" description="Uncharacterized protein C119.09c">
    <location>
        <begin position="1"/>
        <end position="186"/>
    </location>
</feature>
<feature type="transmembrane region" description="Helical" evidence="1">
    <location>
        <begin position="43"/>
        <end position="63"/>
    </location>
</feature>
<feature type="transmembrane region" description="Helical" evidence="1">
    <location>
        <begin position="69"/>
        <end position="89"/>
    </location>
</feature>
<feature type="transmembrane region" description="Helical" evidence="1">
    <location>
        <begin position="143"/>
        <end position="163"/>
    </location>
</feature>
<feature type="sequence conflict" description="In Ref. 2; BAA19218." evidence="2" ref="2">
    <original>Y</original>
    <variation>H</variation>
    <location>
        <position position="41"/>
    </location>
</feature>
<evidence type="ECO:0000255" key="1"/>
<evidence type="ECO:0000305" key="2"/>
<name>YBA9_SCHPO</name>
<proteinExistence type="evidence at transcript level"/>
<accession>O42901</accession>
<accession>P79056</accession>
<protein>
    <recommendedName>
        <fullName>Uncharacterized protein C119.09c</fullName>
    </recommendedName>
</protein>
<comment type="subcellular location">
    <subcellularLocation>
        <location evidence="2">Endoplasmic reticulum membrane</location>
        <topology evidence="2">Multi-pass membrane protein</topology>
    </subcellularLocation>
</comment>
<reference key="1">
    <citation type="journal article" date="2002" name="Nature">
        <title>The genome sequence of Schizosaccharomyces pombe.</title>
        <authorList>
            <person name="Wood V."/>
            <person name="Gwilliam R."/>
            <person name="Rajandream M.A."/>
            <person name="Lyne M.H."/>
            <person name="Lyne R."/>
            <person name="Stewart A."/>
            <person name="Sgouros J.G."/>
            <person name="Peat N."/>
            <person name="Hayles J."/>
            <person name="Baker S.G."/>
            <person name="Basham D."/>
            <person name="Bowman S."/>
            <person name="Brooks K."/>
            <person name="Brown D."/>
            <person name="Brown S."/>
            <person name="Chillingworth T."/>
            <person name="Churcher C.M."/>
            <person name="Collins M."/>
            <person name="Connor R."/>
            <person name="Cronin A."/>
            <person name="Davis P."/>
            <person name="Feltwell T."/>
            <person name="Fraser A."/>
            <person name="Gentles S."/>
            <person name="Goble A."/>
            <person name="Hamlin N."/>
            <person name="Harris D.E."/>
            <person name="Hidalgo J."/>
            <person name="Hodgson G."/>
            <person name="Holroyd S."/>
            <person name="Hornsby T."/>
            <person name="Howarth S."/>
            <person name="Huckle E.J."/>
            <person name="Hunt S."/>
            <person name="Jagels K."/>
            <person name="James K.D."/>
            <person name="Jones L."/>
            <person name="Jones M."/>
            <person name="Leather S."/>
            <person name="McDonald S."/>
            <person name="McLean J."/>
            <person name="Mooney P."/>
            <person name="Moule S."/>
            <person name="Mungall K.L."/>
            <person name="Murphy L.D."/>
            <person name="Niblett D."/>
            <person name="Odell C."/>
            <person name="Oliver K."/>
            <person name="O'Neil S."/>
            <person name="Pearson D."/>
            <person name="Quail M.A."/>
            <person name="Rabbinowitsch E."/>
            <person name="Rutherford K.M."/>
            <person name="Rutter S."/>
            <person name="Saunders D."/>
            <person name="Seeger K."/>
            <person name="Sharp S."/>
            <person name="Skelton J."/>
            <person name="Simmonds M.N."/>
            <person name="Squares R."/>
            <person name="Squares S."/>
            <person name="Stevens K."/>
            <person name="Taylor K."/>
            <person name="Taylor R.G."/>
            <person name="Tivey A."/>
            <person name="Walsh S.V."/>
            <person name="Warren T."/>
            <person name="Whitehead S."/>
            <person name="Woodward J.R."/>
            <person name="Volckaert G."/>
            <person name="Aert R."/>
            <person name="Robben J."/>
            <person name="Grymonprez B."/>
            <person name="Weltjens I."/>
            <person name="Vanstreels E."/>
            <person name="Rieger M."/>
            <person name="Schaefer M."/>
            <person name="Mueller-Auer S."/>
            <person name="Gabel C."/>
            <person name="Fuchs M."/>
            <person name="Duesterhoeft A."/>
            <person name="Fritzc C."/>
            <person name="Holzer E."/>
            <person name="Moestl D."/>
            <person name="Hilbert H."/>
            <person name="Borzym K."/>
            <person name="Langer I."/>
            <person name="Beck A."/>
            <person name="Lehrach H."/>
            <person name="Reinhardt R."/>
            <person name="Pohl T.M."/>
            <person name="Eger P."/>
            <person name="Zimmermann W."/>
            <person name="Wedler H."/>
            <person name="Wambutt R."/>
            <person name="Purnelle B."/>
            <person name="Goffeau A."/>
            <person name="Cadieu E."/>
            <person name="Dreano S."/>
            <person name="Gloux S."/>
            <person name="Lelaure V."/>
            <person name="Mottier S."/>
            <person name="Galibert F."/>
            <person name="Aves S.J."/>
            <person name="Xiang Z."/>
            <person name="Hunt C."/>
            <person name="Moore K."/>
            <person name="Hurst S.M."/>
            <person name="Lucas M."/>
            <person name="Rochet M."/>
            <person name="Gaillardin C."/>
            <person name="Tallada V.A."/>
            <person name="Garzon A."/>
            <person name="Thode G."/>
            <person name="Daga R.R."/>
            <person name="Cruzado L."/>
            <person name="Jimenez J."/>
            <person name="Sanchez M."/>
            <person name="del Rey F."/>
            <person name="Benito J."/>
            <person name="Dominguez A."/>
            <person name="Revuelta J.L."/>
            <person name="Moreno S."/>
            <person name="Armstrong J."/>
            <person name="Forsburg S.L."/>
            <person name="Cerutti L."/>
            <person name="Lowe T."/>
            <person name="McCombie W.R."/>
            <person name="Paulsen I."/>
            <person name="Potashkin J."/>
            <person name="Shpakovski G.V."/>
            <person name="Ussery D."/>
            <person name="Barrell B.G."/>
            <person name="Nurse P."/>
        </authorList>
    </citation>
    <scope>NUCLEOTIDE SEQUENCE [LARGE SCALE GENOMIC DNA]</scope>
    <source>
        <strain>972 / ATCC 24843</strain>
    </source>
</reference>
<reference key="2">
    <citation type="journal article" date="1997" name="DNA Res.">
        <title>Identification of open reading frames in Schizosaccharomyces pombe cDNAs.</title>
        <authorList>
            <person name="Yoshioka S."/>
            <person name="Kato K."/>
            <person name="Nakai K."/>
            <person name="Okayama H."/>
            <person name="Nojima H."/>
        </authorList>
    </citation>
    <scope>NUCLEOTIDE SEQUENCE [LARGE SCALE MRNA] OF 37-186</scope>
    <source>
        <strain>PR745</strain>
    </source>
</reference>
<dbReference type="EMBL" id="CU329671">
    <property type="protein sequence ID" value="CAA17924.1"/>
    <property type="molecule type" value="Genomic_DNA"/>
</dbReference>
<dbReference type="EMBL" id="AB001024">
    <property type="protein sequence ID" value="BAA19218.1"/>
    <property type="molecule type" value="mRNA"/>
</dbReference>
<dbReference type="PIR" id="T39307">
    <property type="entry name" value="T39307"/>
</dbReference>
<dbReference type="SMR" id="O42901"/>
<dbReference type="BioGRID" id="276592">
    <property type="interactions" value="4"/>
</dbReference>
<dbReference type="FunCoup" id="O42901">
    <property type="interactions" value="274"/>
</dbReference>
<dbReference type="IntAct" id="O42901">
    <property type="interactions" value="1"/>
</dbReference>
<dbReference type="STRING" id="284812.O42901"/>
<dbReference type="iPTMnet" id="O42901"/>
<dbReference type="SwissPalm" id="O42901"/>
<dbReference type="PaxDb" id="4896-SPBC119.09c.1"/>
<dbReference type="EnsemblFungi" id="SPBC119.09c.1">
    <property type="protein sequence ID" value="SPBC119.09c.1:pep"/>
    <property type="gene ID" value="SPBC119.09c"/>
</dbReference>
<dbReference type="KEGG" id="spo:2540054"/>
<dbReference type="PomBase" id="SPBC119.09c"/>
<dbReference type="VEuPathDB" id="FungiDB:SPBC119.09c"/>
<dbReference type="eggNOG" id="KOG3319">
    <property type="taxonomic scope" value="Eukaryota"/>
</dbReference>
<dbReference type="HOGENOM" id="CLU_072117_2_0_1"/>
<dbReference type="InParanoid" id="O42901"/>
<dbReference type="OMA" id="STHYTHF"/>
<dbReference type="PhylomeDB" id="O42901"/>
<dbReference type="Reactome" id="R-SPO-6798695">
    <property type="pathway name" value="Neutrophil degranulation"/>
</dbReference>
<dbReference type="PRO" id="PR:O42901"/>
<dbReference type="Proteomes" id="UP000002485">
    <property type="component" value="Chromosome II"/>
</dbReference>
<dbReference type="GO" id="GO:0005783">
    <property type="term" value="C:endoplasmic reticulum"/>
    <property type="evidence" value="ECO:0007005"/>
    <property type="project" value="PomBase"/>
</dbReference>
<dbReference type="GO" id="GO:0005789">
    <property type="term" value="C:endoplasmic reticulum membrane"/>
    <property type="evidence" value="ECO:0000305"/>
    <property type="project" value="PomBase"/>
</dbReference>
<dbReference type="GO" id="GO:0017059">
    <property type="term" value="C:serine palmitoyltransferase complex"/>
    <property type="evidence" value="ECO:0000318"/>
    <property type="project" value="GO_Central"/>
</dbReference>
<dbReference type="GO" id="GO:0006672">
    <property type="term" value="P:ceramide metabolic process"/>
    <property type="evidence" value="ECO:0000318"/>
    <property type="project" value="GO_Central"/>
</dbReference>
<dbReference type="GO" id="GO:0090156">
    <property type="term" value="P:intracellular sphingolipid homeostasis"/>
    <property type="evidence" value="ECO:0000318"/>
    <property type="project" value="GO_Central"/>
</dbReference>
<dbReference type="GO" id="GO:0030148">
    <property type="term" value="P:sphingolipid biosynthetic process"/>
    <property type="evidence" value="ECO:0000318"/>
    <property type="project" value="GO_Central"/>
</dbReference>
<dbReference type="InterPro" id="IPR007203">
    <property type="entry name" value="ORMDL"/>
</dbReference>
<dbReference type="PANTHER" id="PTHR12665">
    <property type="entry name" value="ORMDL PROTEINS"/>
    <property type="match status" value="1"/>
</dbReference>
<dbReference type="Pfam" id="PF04061">
    <property type="entry name" value="ORMDL"/>
    <property type="match status" value="1"/>
</dbReference>
<dbReference type="PIRSF" id="PIRSF018147">
    <property type="entry name" value="ORMDL"/>
    <property type="match status" value="1"/>
</dbReference>
<gene>
    <name type="ORF">SPBC119.09c</name>
</gene>